<keyword id="KW-1185">Reference proteome</keyword>
<keyword id="KW-0687">Ribonucleoprotein</keyword>
<keyword id="KW-0689">Ribosomal protein</keyword>
<keyword id="KW-0694">RNA-binding</keyword>
<keyword id="KW-0699">rRNA-binding</keyword>
<proteinExistence type="inferred from homology"/>
<reference key="1">
    <citation type="journal article" date="2016" name="Genome Announc.">
        <title>Complete genome sequence of Alkaliphilus metalliredigens strain QYMF, an alkaliphilic and metal-reducing bacterium isolated from borax-contaminated leachate ponds.</title>
        <authorList>
            <person name="Hwang C."/>
            <person name="Copeland A."/>
            <person name="Lucas S."/>
            <person name="Lapidus A."/>
            <person name="Barry K."/>
            <person name="Detter J.C."/>
            <person name="Glavina Del Rio T."/>
            <person name="Hammon N."/>
            <person name="Israni S."/>
            <person name="Dalin E."/>
            <person name="Tice H."/>
            <person name="Pitluck S."/>
            <person name="Chertkov O."/>
            <person name="Brettin T."/>
            <person name="Bruce D."/>
            <person name="Han C."/>
            <person name="Schmutz J."/>
            <person name="Larimer F."/>
            <person name="Land M.L."/>
            <person name="Hauser L."/>
            <person name="Kyrpides N."/>
            <person name="Mikhailova N."/>
            <person name="Ye Q."/>
            <person name="Zhou J."/>
            <person name="Richardson P."/>
            <person name="Fields M.W."/>
        </authorList>
    </citation>
    <scope>NUCLEOTIDE SEQUENCE [LARGE SCALE GENOMIC DNA]</scope>
    <source>
        <strain>QYMF</strain>
    </source>
</reference>
<gene>
    <name evidence="1" type="primary">rplN</name>
    <name type="ordered locus">Amet_4468</name>
</gene>
<comment type="function">
    <text evidence="1">Binds to 23S rRNA. Forms part of two intersubunit bridges in the 70S ribosome.</text>
</comment>
<comment type="subunit">
    <text evidence="1">Part of the 50S ribosomal subunit. Forms a cluster with proteins L3 and L19. In the 70S ribosome, L14 and L19 interact and together make contacts with the 16S rRNA in bridges B5 and B8.</text>
</comment>
<comment type="similarity">
    <text evidence="1">Belongs to the universal ribosomal protein uL14 family.</text>
</comment>
<dbReference type="EMBL" id="CP000724">
    <property type="protein sequence ID" value="ABR50540.1"/>
    <property type="molecule type" value="Genomic_DNA"/>
</dbReference>
<dbReference type="RefSeq" id="WP_012065431.1">
    <property type="nucleotide sequence ID" value="NC_009633.1"/>
</dbReference>
<dbReference type="SMR" id="A6TWH2"/>
<dbReference type="STRING" id="293826.Amet_4468"/>
<dbReference type="KEGG" id="amt:Amet_4468"/>
<dbReference type="eggNOG" id="COG0093">
    <property type="taxonomic scope" value="Bacteria"/>
</dbReference>
<dbReference type="HOGENOM" id="CLU_095071_2_1_9"/>
<dbReference type="OrthoDB" id="9806379at2"/>
<dbReference type="Proteomes" id="UP000001572">
    <property type="component" value="Chromosome"/>
</dbReference>
<dbReference type="GO" id="GO:0022625">
    <property type="term" value="C:cytosolic large ribosomal subunit"/>
    <property type="evidence" value="ECO:0007669"/>
    <property type="project" value="TreeGrafter"/>
</dbReference>
<dbReference type="GO" id="GO:0070180">
    <property type="term" value="F:large ribosomal subunit rRNA binding"/>
    <property type="evidence" value="ECO:0007669"/>
    <property type="project" value="TreeGrafter"/>
</dbReference>
<dbReference type="GO" id="GO:0003735">
    <property type="term" value="F:structural constituent of ribosome"/>
    <property type="evidence" value="ECO:0007669"/>
    <property type="project" value="InterPro"/>
</dbReference>
<dbReference type="GO" id="GO:0006412">
    <property type="term" value="P:translation"/>
    <property type="evidence" value="ECO:0007669"/>
    <property type="project" value="UniProtKB-UniRule"/>
</dbReference>
<dbReference type="CDD" id="cd00337">
    <property type="entry name" value="Ribosomal_uL14"/>
    <property type="match status" value="1"/>
</dbReference>
<dbReference type="FunFam" id="2.40.150.20:FF:000001">
    <property type="entry name" value="50S ribosomal protein L14"/>
    <property type="match status" value="1"/>
</dbReference>
<dbReference type="Gene3D" id="2.40.150.20">
    <property type="entry name" value="Ribosomal protein L14"/>
    <property type="match status" value="1"/>
</dbReference>
<dbReference type="HAMAP" id="MF_01367">
    <property type="entry name" value="Ribosomal_uL14"/>
    <property type="match status" value="1"/>
</dbReference>
<dbReference type="InterPro" id="IPR000218">
    <property type="entry name" value="Ribosomal_uL14"/>
</dbReference>
<dbReference type="InterPro" id="IPR005745">
    <property type="entry name" value="Ribosomal_uL14_bac-type"/>
</dbReference>
<dbReference type="InterPro" id="IPR019972">
    <property type="entry name" value="Ribosomal_uL14_CS"/>
</dbReference>
<dbReference type="InterPro" id="IPR036853">
    <property type="entry name" value="Ribosomal_uL14_sf"/>
</dbReference>
<dbReference type="NCBIfam" id="TIGR01067">
    <property type="entry name" value="rplN_bact"/>
    <property type="match status" value="1"/>
</dbReference>
<dbReference type="PANTHER" id="PTHR11761">
    <property type="entry name" value="50S/60S RIBOSOMAL PROTEIN L14/L23"/>
    <property type="match status" value="1"/>
</dbReference>
<dbReference type="PANTHER" id="PTHR11761:SF3">
    <property type="entry name" value="LARGE RIBOSOMAL SUBUNIT PROTEIN UL14M"/>
    <property type="match status" value="1"/>
</dbReference>
<dbReference type="Pfam" id="PF00238">
    <property type="entry name" value="Ribosomal_L14"/>
    <property type="match status" value="1"/>
</dbReference>
<dbReference type="SMART" id="SM01374">
    <property type="entry name" value="Ribosomal_L14"/>
    <property type="match status" value="1"/>
</dbReference>
<dbReference type="SUPFAM" id="SSF50193">
    <property type="entry name" value="Ribosomal protein L14"/>
    <property type="match status" value="1"/>
</dbReference>
<dbReference type="PROSITE" id="PS00049">
    <property type="entry name" value="RIBOSOMAL_L14"/>
    <property type="match status" value="1"/>
</dbReference>
<protein>
    <recommendedName>
        <fullName evidence="1">Large ribosomal subunit protein uL14</fullName>
    </recommendedName>
    <alternativeName>
        <fullName evidence="2">50S ribosomal protein L14</fullName>
    </alternativeName>
</protein>
<sequence>MIQQESRLKVADNSGAKELLCIRVLGGTRRRYANVGDVIVCSVKSATPGGVVKKGEVVKAVVVRTVSTTRRKDGTYIKFDENAAVIIKDDKQMVGTRIFGPVTRELRDRDFMKIVSLAPEVL</sequence>
<name>RL14_ALKMQ</name>
<evidence type="ECO:0000255" key="1">
    <source>
        <dbReference type="HAMAP-Rule" id="MF_01367"/>
    </source>
</evidence>
<evidence type="ECO:0000305" key="2"/>
<accession>A6TWH2</accession>
<feature type="chain" id="PRO_1000068001" description="Large ribosomal subunit protein uL14">
    <location>
        <begin position="1"/>
        <end position="122"/>
    </location>
</feature>
<organism>
    <name type="scientific">Alkaliphilus metalliredigens (strain QYMF)</name>
    <dbReference type="NCBI Taxonomy" id="293826"/>
    <lineage>
        <taxon>Bacteria</taxon>
        <taxon>Bacillati</taxon>
        <taxon>Bacillota</taxon>
        <taxon>Clostridia</taxon>
        <taxon>Peptostreptococcales</taxon>
        <taxon>Natronincolaceae</taxon>
        <taxon>Alkaliphilus</taxon>
    </lineage>
</organism>